<protein>
    <recommendedName>
        <fullName evidence="1">Ribosomal protein uS12 methylthiotransferase RimO</fullName>
        <shortName evidence="1">uS12 MTTase</shortName>
        <shortName evidence="1">uS12 methylthiotransferase</shortName>
        <ecNumber evidence="1">2.8.4.4</ecNumber>
    </recommendedName>
    <alternativeName>
        <fullName evidence="1">Ribosomal protein uS12 (aspartate-C(3))-methylthiotransferase</fullName>
    </alternativeName>
    <alternativeName>
        <fullName evidence="1">Ribosome maturation factor RimO</fullName>
    </alternativeName>
</protein>
<gene>
    <name evidence="1" type="primary">rimO</name>
    <name type="ordered locus">aq_849</name>
</gene>
<sequence>MKIGVVSLGCAKNLVDSEILLGKLKGAGVELTPNPEEADVIIVNTCGFIEPAKLESIETILEFAESGKEVIVMGCLVERYKEELEKEIPEVKAYFGTESWNEILNYLGLKEKKEIKRILSTPRSYAYLKIAEGCNRLCSFCAIPKIRGRHRSRKIEEIVDEAKFLADQGVKEICVVSQDTTYYGKDLYKEYKLVELLEGLEKVEGIKWIRLLYLYPTEVHEDLIDYVANSEKVLPYFDVPLQHVSDRVLKDMRRGYDGKFVRNLIENIRKKIENAVFRTTFIVGFPTESEEDFKELKKFVEEGHFHWLGVFTYSPEEGTHAYPLGDPIPREVKEERREELMAIQRGITRKKNEEFLGKEIEVLIDGYEEEFSFVPKGRAYFQAPEVDGVVYVESSRDLKSGDILKVKVTQVADYDLAGRDTEALDLIFSSEE</sequence>
<comment type="function">
    <text evidence="1">Catalyzes the methylthiolation of an aspartic acid residue of ribosomal protein uS12.</text>
</comment>
<comment type="catalytic activity">
    <reaction evidence="1">
        <text>L-aspartate(89)-[ribosomal protein uS12]-hydrogen + (sulfur carrier)-SH + AH2 + 2 S-adenosyl-L-methionine = 3-methylsulfanyl-L-aspartate(89)-[ribosomal protein uS12]-hydrogen + (sulfur carrier)-H + 5'-deoxyadenosine + L-methionine + A + S-adenosyl-L-homocysteine + 2 H(+)</text>
        <dbReference type="Rhea" id="RHEA:37087"/>
        <dbReference type="Rhea" id="RHEA-COMP:10460"/>
        <dbReference type="Rhea" id="RHEA-COMP:10461"/>
        <dbReference type="Rhea" id="RHEA-COMP:14737"/>
        <dbReference type="Rhea" id="RHEA-COMP:14739"/>
        <dbReference type="ChEBI" id="CHEBI:13193"/>
        <dbReference type="ChEBI" id="CHEBI:15378"/>
        <dbReference type="ChEBI" id="CHEBI:17319"/>
        <dbReference type="ChEBI" id="CHEBI:17499"/>
        <dbReference type="ChEBI" id="CHEBI:29917"/>
        <dbReference type="ChEBI" id="CHEBI:29961"/>
        <dbReference type="ChEBI" id="CHEBI:57844"/>
        <dbReference type="ChEBI" id="CHEBI:57856"/>
        <dbReference type="ChEBI" id="CHEBI:59789"/>
        <dbReference type="ChEBI" id="CHEBI:64428"/>
        <dbReference type="ChEBI" id="CHEBI:73599"/>
        <dbReference type="EC" id="2.8.4.4"/>
    </reaction>
</comment>
<comment type="cofactor">
    <cofactor evidence="1">
        <name>[4Fe-4S] cluster</name>
        <dbReference type="ChEBI" id="CHEBI:49883"/>
    </cofactor>
    <text evidence="1">Binds 2 [4Fe-4S] clusters. One cluster is coordinated with 3 cysteines and an exchangeable S-adenosyl-L-methionine.</text>
</comment>
<comment type="subcellular location">
    <subcellularLocation>
        <location evidence="1">Cytoplasm</location>
    </subcellularLocation>
</comment>
<comment type="similarity">
    <text evidence="1">Belongs to the methylthiotransferase family. RimO subfamily.</text>
</comment>
<accession>O67016</accession>
<keyword id="KW-0004">4Fe-4S</keyword>
<keyword id="KW-0963">Cytoplasm</keyword>
<keyword id="KW-0408">Iron</keyword>
<keyword id="KW-0411">Iron-sulfur</keyword>
<keyword id="KW-0479">Metal-binding</keyword>
<keyword id="KW-1185">Reference proteome</keyword>
<keyword id="KW-0949">S-adenosyl-L-methionine</keyword>
<keyword id="KW-0808">Transferase</keyword>
<reference key="1">
    <citation type="journal article" date="1998" name="Nature">
        <title>The complete genome of the hyperthermophilic bacterium Aquifex aeolicus.</title>
        <authorList>
            <person name="Deckert G."/>
            <person name="Warren P.V."/>
            <person name="Gaasterland T."/>
            <person name="Young W.G."/>
            <person name="Lenox A.L."/>
            <person name="Graham D.E."/>
            <person name="Overbeek R."/>
            <person name="Snead M.A."/>
            <person name="Keller M."/>
            <person name="Aujay M."/>
            <person name="Huber R."/>
            <person name="Feldman R.A."/>
            <person name="Short J.M."/>
            <person name="Olsen G.J."/>
            <person name="Swanson R.V."/>
        </authorList>
    </citation>
    <scope>NUCLEOTIDE SEQUENCE [LARGE SCALE GENOMIC DNA]</scope>
    <source>
        <strain>VF5</strain>
    </source>
</reference>
<organism>
    <name type="scientific">Aquifex aeolicus (strain VF5)</name>
    <dbReference type="NCBI Taxonomy" id="224324"/>
    <lineage>
        <taxon>Bacteria</taxon>
        <taxon>Pseudomonadati</taxon>
        <taxon>Aquificota</taxon>
        <taxon>Aquificia</taxon>
        <taxon>Aquificales</taxon>
        <taxon>Aquificaceae</taxon>
        <taxon>Aquifex</taxon>
    </lineage>
</organism>
<evidence type="ECO:0000255" key="1">
    <source>
        <dbReference type="HAMAP-Rule" id="MF_01865"/>
    </source>
</evidence>
<evidence type="ECO:0000255" key="2">
    <source>
        <dbReference type="PROSITE-ProRule" id="PRU01266"/>
    </source>
</evidence>
<feature type="chain" id="PRO_0000141727" description="Ribosomal protein uS12 methylthiotransferase RimO">
    <location>
        <begin position="1"/>
        <end position="432"/>
    </location>
</feature>
<feature type="domain" description="MTTase N-terminal" evidence="1">
    <location>
        <begin position="1"/>
        <end position="112"/>
    </location>
</feature>
<feature type="domain" description="Radical SAM core" evidence="2">
    <location>
        <begin position="120"/>
        <end position="350"/>
    </location>
</feature>
<feature type="domain" description="TRAM" evidence="1">
    <location>
        <begin position="353"/>
        <end position="422"/>
    </location>
</feature>
<feature type="binding site" evidence="1">
    <location>
        <position position="10"/>
    </location>
    <ligand>
        <name>[4Fe-4S] cluster</name>
        <dbReference type="ChEBI" id="CHEBI:49883"/>
        <label>1</label>
    </ligand>
</feature>
<feature type="binding site" evidence="1">
    <location>
        <position position="46"/>
    </location>
    <ligand>
        <name>[4Fe-4S] cluster</name>
        <dbReference type="ChEBI" id="CHEBI:49883"/>
        <label>1</label>
    </ligand>
</feature>
<feature type="binding site" evidence="1">
    <location>
        <position position="75"/>
    </location>
    <ligand>
        <name>[4Fe-4S] cluster</name>
        <dbReference type="ChEBI" id="CHEBI:49883"/>
        <label>1</label>
    </ligand>
</feature>
<feature type="binding site" evidence="1">
    <location>
        <position position="134"/>
    </location>
    <ligand>
        <name>[4Fe-4S] cluster</name>
        <dbReference type="ChEBI" id="CHEBI:49883"/>
        <label>2</label>
        <note>4Fe-4S-S-AdoMet</note>
    </ligand>
</feature>
<feature type="binding site" evidence="1">
    <location>
        <position position="138"/>
    </location>
    <ligand>
        <name>[4Fe-4S] cluster</name>
        <dbReference type="ChEBI" id="CHEBI:49883"/>
        <label>2</label>
        <note>4Fe-4S-S-AdoMet</note>
    </ligand>
</feature>
<feature type="binding site" evidence="1">
    <location>
        <position position="141"/>
    </location>
    <ligand>
        <name>[4Fe-4S] cluster</name>
        <dbReference type="ChEBI" id="CHEBI:49883"/>
        <label>2</label>
        <note>4Fe-4S-S-AdoMet</note>
    </ligand>
</feature>
<proteinExistence type="inferred from homology"/>
<dbReference type="EC" id="2.8.4.4" evidence="1"/>
<dbReference type="EMBL" id="AE000657">
    <property type="protein sequence ID" value="AAC06982.1"/>
    <property type="molecule type" value="Genomic_DNA"/>
</dbReference>
<dbReference type="PIR" id="E70373">
    <property type="entry name" value="E70373"/>
</dbReference>
<dbReference type="RefSeq" id="NP_213577.1">
    <property type="nucleotide sequence ID" value="NC_000918.1"/>
</dbReference>
<dbReference type="RefSeq" id="WP_010880515.1">
    <property type="nucleotide sequence ID" value="NC_000918.1"/>
</dbReference>
<dbReference type="SMR" id="O67016"/>
<dbReference type="FunCoup" id="O67016">
    <property type="interactions" value="317"/>
</dbReference>
<dbReference type="STRING" id="224324.aq_849"/>
<dbReference type="EnsemblBacteria" id="AAC06982">
    <property type="protein sequence ID" value="AAC06982"/>
    <property type="gene ID" value="aq_849"/>
</dbReference>
<dbReference type="KEGG" id="aae:aq_849"/>
<dbReference type="PATRIC" id="fig|224324.8.peg.664"/>
<dbReference type="eggNOG" id="COG0621">
    <property type="taxonomic scope" value="Bacteria"/>
</dbReference>
<dbReference type="HOGENOM" id="CLU_018697_0_1_0"/>
<dbReference type="InParanoid" id="O67016"/>
<dbReference type="OrthoDB" id="9805215at2"/>
<dbReference type="Proteomes" id="UP000000798">
    <property type="component" value="Chromosome"/>
</dbReference>
<dbReference type="GO" id="GO:0005829">
    <property type="term" value="C:cytosol"/>
    <property type="evidence" value="ECO:0000318"/>
    <property type="project" value="GO_Central"/>
</dbReference>
<dbReference type="GO" id="GO:0051539">
    <property type="term" value="F:4 iron, 4 sulfur cluster binding"/>
    <property type="evidence" value="ECO:0000318"/>
    <property type="project" value="GO_Central"/>
</dbReference>
<dbReference type="GO" id="GO:0035599">
    <property type="term" value="F:aspartic acid methylthiotransferase activity"/>
    <property type="evidence" value="ECO:0000318"/>
    <property type="project" value="GO_Central"/>
</dbReference>
<dbReference type="GO" id="GO:0046872">
    <property type="term" value="F:metal ion binding"/>
    <property type="evidence" value="ECO:0007669"/>
    <property type="project" value="UniProtKB-KW"/>
</dbReference>
<dbReference type="GO" id="GO:0103039">
    <property type="term" value="F:protein methylthiotransferase activity"/>
    <property type="evidence" value="ECO:0007669"/>
    <property type="project" value="UniProtKB-EC"/>
</dbReference>
<dbReference type="GO" id="GO:0006400">
    <property type="term" value="P:tRNA modification"/>
    <property type="evidence" value="ECO:0007669"/>
    <property type="project" value="InterPro"/>
</dbReference>
<dbReference type="CDD" id="cd01335">
    <property type="entry name" value="Radical_SAM"/>
    <property type="match status" value="1"/>
</dbReference>
<dbReference type="FunFam" id="2.40.50.140:FF:000210">
    <property type="entry name" value="Ribosomal protein S12 methylthiotransferase RimO"/>
    <property type="match status" value="1"/>
</dbReference>
<dbReference type="FunFam" id="3.40.50.12160:FF:000002">
    <property type="entry name" value="Ribosomal protein S12 methylthiotransferase RimO"/>
    <property type="match status" value="1"/>
</dbReference>
<dbReference type="FunFam" id="3.80.30.20:FF:000001">
    <property type="entry name" value="tRNA-2-methylthio-N(6)-dimethylallyladenosine synthase 2"/>
    <property type="match status" value="1"/>
</dbReference>
<dbReference type="Gene3D" id="3.40.50.12160">
    <property type="entry name" value="Methylthiotransferase, N-terminal domain"/>
    <property type="match status" value="1"/>
</dbReference>
<dbReference type="Gene3D" id="2.40.50.140">
    <property type="entry name" value="Nucleic acid-binding proteins"/>
    <property type="match status" value="1"/>
</dbReference>
<dbReference type="Gene3D" id="3.80.30.20">
    <property type="entry name" value="tm_1862 like domain"/>
    <property type="match status" value="1"/>
</dbReference>
<dbReference type="HAMAP" id="MF_01865">
    <property type="entry name" value="MTTase_RimO"/>
    <property type="match status" value="1"/>
</dbReference>
<dbReference type="InterPro" id="IPR006638">
    <property type="entry name" value="Elp3/MiaA/NifB-like_rSAM"/>
</dbReference>
<dbReference type="InterPro" id="IPR005839">
    <property type="entry name" value="Methylthiotransferase"/>
</dbReference>
<dbReference type="InterPro" id="IPR020612">
    <property type="entry name" value="Methylthiotransferase_CS"/>
</dbReference>
<dbReference type="InterPro" id="IPR013848">
    <property type="entry name" value="Methylthiotransferase_N"/>
</dbReference>
<dbReference type="InterPro" id="IPR038135">
    <property type="entry name" value="Methylthiotransferase_N_sf"/>
</dbReference>
<dbReference type="InterPro" id="IPR012340">
    <property type="entry name" value="NA-bd_OB-fold"/>
</dbReference>
<dbReference type="InterPro" id="IPR005840">
    <property type="entry name" value="Ribosomal_uS12_MeSTrfase_RimO"/>
</dbReference>
<dbReference type="InterPro" id="IPR007197">
    <property type="entry name" value="rSAM"/>
</dbReference>
<dbReference type="InterPro" id="IPR023404">
    <property type="entry name" value="rSAM_horseshoe"/>
</dbReference>
<dbReference type="InterPro" id="IPR002792">
    <property type="entry name" value="TRAM_dom"/>
</dbReference>
<dbReference type="NCBIfam" id="TIGR01125">
    <property type="entry name" value="30S ribosomal protein S12 methylthiotransferase RimO"/>
    <property type="match status" value="1"/>
</dbReference>
<dbReference type="NCBIfam" id="TIGR00089">
    <property type="entry name" value="MiaB/RimO family radical SAM methylthiotransferase"/>
    <property type="match status" value="1"/>
</dbReference>
<dbReference type="PANTHER" id="PTHR43837">
    <property type="entry name" value="RIBOSOMAL PROTEIN S12 METHYLTHIOTRANSFERASE RIMO"/>
    <property type="match status" value="1"/>
</dbReference>
<dbReference type="PANTHER" id="PTHR43837:SF1">
    <property type="entry name" value="RIBOSOMAL PROTEIN US12 METHYLTHIOTRANSFERASE RIMO"/>
    <property type="match status" value="1"/>
</dbReference>
<dbReference type="Pfam" id="PF04055">
    <property type="entry name" value="Radical_SAM"/>
    <property type="match status" value="1"/>
</dbReference>
<dbReference type="Pfam" id="PF18693">
    <property type="entry name" value="TRAM_2"/>
    <property type="match status" value="1"/>
</dbReference>
<dbReference type="Pfam" id="PF00919">
    <property type="entry name" value="UPF0004"/>
    <property type="match status" value="1"/>
</dbReference>
<dbReference type="SFLD" id="SFLDG01082">
    <property type="entry name" value="B12-binding_domain_containing"/>
    <property type="match status" value="1"/>
</dbReference>
<dbReference type="SFLD" id="SFLDG01061">
    <property type="entry name" value="methylthiotransferase"/>
    <property type="match status" value="1"/>
</dbReference>
<dbReference type="SFLD" id="SFLDF00274">
    <property type="entry name" value="ribosomal_protein_S12_methylth"/>
    <property type="match status" value="1"/>
</dbReference>
<dbReference type="SMART" id="SM00729">
    <property type="entry name" value="Elp3"/>
    <property type="match status" value="1"/>
</dbReference>
<dbReference type="SUPFAM" id="SSF102114">
    <property type="entry name" value="Radical SAM enzymes"/>
    <property type="match status" value="1"/>
</dbReference>
<dbReference type="PROSITE" id="PS51449">
    <property type="entry name" value="MTTASE_N"/>
    <property type="match status" value="1"/>
</dbReference>
<dbReference type="PROSITE" id="PS01278">
    <property type="entry name" value="MTTASE_RADICAL"/>
    <property type="match status" value="1"/>
</dbReference>
<dbReference type="PROSITE" id="PS51918">
    <property type="entry name" value="RADICAL_SAM"/>
    <property type="match status" value="1"/>
</dbReference>
<dbReference type="PROSITE" id="PS50926">
    <property type="entry name" value="TRAM"/>
    <property type="match status" value="1"/>
</dbReference>
<name>RIMO_AQUAE</name>